<organism>
    <name type="scientific">Vibrio vulnificus (strain YJ016)</name>
    <dbReference type="NCBI Taxonomy" id="196600"/>
    <lineage>
        <taxon>Bacteria</taxon>
        <taxon>Pseudomonadati</taxon>
        <taxon>Pseudomonadota</taxon>
        <taxon>Gammaproteobacteria</taxon>
        <taxon>Vibrionales</taxon>
        <taxon>Vibrionaceae</taxon>
        <taxon>Vibrio</taxon>
    </lineage>
</organism>
<sequence>MSRVAKAPVAIPAGVEVKLNGQEITVKGAKGELSRVINNAVVIAQEENKLTFGPREGVANAWAQAGTARALVNNMVVGVTEGFTRKLILKGVGYRAAIKGNAVGLTLGFSHPVEHELPAGIKAECPSQTEIVLTGCDKQLIGQVAADIRAYRAPEPYKGKGIRYADENVRSKEAKKK</sequence>
<accession>Q7MPH3</accession>
<gene>
    <name evidence="1" type="primary">rplF</name>
    <name type="ordered locus">VV0390</name>
</gene>
<protein>
    <recommendedName>
        <fullName evidence="1">Large ribosomal subunit protein uL6</fullName>
    </recommendedName>
    <alternativeName>
        <fullName evidence="2">50S ribosomal protein L6</fullName>
    </alternativeName>
</protein>
<evidence type="ECO:0000255" key="1">
    <source>
        <dbReference type="HAMAP-Rule" id="MF_01365"/>
    </source>
</evidence>
<evidence type="ECO:0000305" key="2"/>
<name>RL6_VIBVY</name>
<comment type="function">
    <text evidence="1">This protein binds to the 23S rRNA, and is important in its secondary structure. It is located near the subunit interface in the base of the L7/L12 stalk, and near the tRNA binding site of the peptidyltransferase center.</text>
</comment>
<comment type="subunit">
    <text evidence="1">Part of the 50S ribosomal subunit.</text>
</comment>
<comment type="similarity">
    <text evidence="1">Belongs to the universal ribosomal protein uL6 family.</text>
</comment>
<feature type="chain" id="PRO_0000265311" description="Large ribosomal subunit protein uL6">
    <location>
        <begin position="1"/>
        <end position="177"/>
    </location>
</feature>
<keyword id="KW-0687">Ribonucleoprotein</keyword>
<keyword id="KW-0689">Ribosomal protein</keyword>
<keyword id="KW-0694">RNA-binding</keyword>
<keyword id="KW-0699">rRNA-binding</keyword>
<reference key="1">
    <citation type="journal article" date="2003" name="Genome Res.">
        <title>Comparative genome analysis of Vibrio vulnificus, a marine pathogen.</title>
        <authorList>
            <person name="Chen C.-Y."/>
            <person name="Wu K.-M."/>
            <person name="Chang Y.-C."/>
            <person name="Chang C.-H."/>
            <person name="Tsai H.-C."/>
            <person name="Liao T.-L."/>
            <person name="Liu Y.-M."/>
            <person name="Chen H.-J."/>
            <person name="Shen A.B.-T."/>
            <person name="Li J.-C."/>
            <person name="Su T.-L."/>
            <person name="Shao C.-P."/>
            <person name="Lee C.-T."/>
            <person name="Hor L.-I."/>
            <person name="Tsai S.-F."/>
        </authorList>
    </citation>
    <scope>NUCLEOTIDE SEQUENCE [LARGE SCALE GENOMIC DNA]</scope>
    <source>
        <strain>YJ016</strain>
    </source>
</reference>
<proteinExistence type="inferred from homology"/>
<dbReference type="EMBL" id="BA000037">
    <property type="protein sequence ID" value="BAC93154.1"/>
    <property type="molecule type" value="Genomic_DNA"/>
</dbReference>
<dbReference type="RefSeq" id="WP_011078818.1">
    <property type="nucleotide sequence ID" value="NC_005139.1"/>
</dbReference>
<dbReference type="SMR" id="Q7MPH3"/>
<dbReference type="STRING" id="672.VV93_v1c03610"/>
<dbReference type="GeneID" id="93895051"/>
<dbReference type="KEGG" id="vvy:VV0390"/>
<dbReference type="eggNOG" id="COG0097">
    <property type="taxonomic scope" value="Bacteria"/>
</dbReference>
<dbReference type="HOGENOM" id="CLU_065464_1_2_6"/>
<dbReference type="Proteomes" id="UP000002675">
    <property type="component" value="Chromosome I"/>
</dbReference>
<dbReference type="GO" id="GO:0022625">
    <property type="term" value="C:cytosolic large ribosomal subunit"/>
    <property type="evidence" value="ECO:0007669"/>
    <property type="project" value="TreeGrafter"/>
</dbReference>
<dbReference type="GO" id="GO:0019843">
    <property type="term" value="F:rRNA binding"/>
    <property type="evidence" value="ECO:0007669"/>
    <property type="project" value="UniProtKB-UniRule"/>
</dbReference>
<dbReference type="GO" id="GO:0003735">
    <property type="term" value="F:structural constituent of ribosome"/>
    <property type="evidence" value="ECO:0007669"/>
    <property type="project" value="InterPro"/>
</dbReference>
<dbReference type="GO" id="GO:0002181">
    <property type="term" value="P:cytoplasmic translation"/>
    <property type="evidence" value="ECO:0007669"/>
    <property type="project" value="TreeGrafter"/>
</dbReference>
<dbReference type="FunFam" id="3.90.930.12:FF:000001">
    <property type="entry name" value="50S ribosomal protein L6"/>
    <property type="match status" value="1"/>
</dbReference>
<dbReference type="FunFam" id="3.90.930.12:FF:000002">
    <property type="entry name" value="50S ribosomal protein L6"/>
    <property type="match status" value="1"/>
</dbReference>
<dbReference type="Gene3D" id="3.90.930.12">
    <property type="entry name" value="Ribosomal protein L6, alpha-beta domain"/>
    <property type="match status" value="2"/>
</dbReference>
<dbReference type="HAMAP" id="MF_01365_B">
    <property type="entry name" value="Ribosomal_uL6_B"/>
    <property type="match status" value="1"/>
</dbReference>
<dbReference type="InterPro" id="IPR000702">
    <property type="entry name" value="Ribosomal_uL6-like"/>
</dbReference>
<dbReference type="InterPro" id="IPR036789">
    <property type="entry name" value="Ribosomal_uL6-like_a/b-dom_sf"/>
</dbReference>
<dbReference type="InterPro" id="IPR020040">
    <property type="entry name" value="Ribosomal_uL6_a/b-dom"/>
</dbReference>
<dbReference type="InterPro" id="IPR019906">
    <property type="entry name" value="Ribosomal_uL6_bac-type"/>
</dbReference>
<dbReference type="InterPro" id="IPR002358">
    <property type="entry name" value="Ribosomal_uL6_CS"/>
</dbReference>
<dbReference type="NCBIfam" id="TIGR03654">
    <property type="entry name" value="L6_bact"/>
    <property type="match status" value="1"/>
</dbReference>
<dbReference type="PANTHER" id="PTHR11655">
    <property type="entry name" value="60S/50S RIBOSOMAL PROTEIN L6/L9"/>
    <property type="match status" value="1"/>
</dbReference>
<dbReference type="PANTHER" id="PTHR11655:SF14">
    <property type="entry name" value="LARGE RIBOSOMAL SUBUNIT PROTEIN UL6M"/>
    <property type="match status" value="1"/>
</dbReference>
<dbReference type="Pfam" id="PF00347">
    <property type="entry name" value="Ribosomal_L6"/>
    <property type="match status" value="2"/>
</dbReference>
<dbReference type="PIRSF" id="PIRSF002162">
    <property type="entry name" value="Ribosomal_L6"/>
    <property type="match status" value="1"/>
</dbReference>
<dbReference type="PRINTS" id="PR00059">
    <property type="entry name" value="RIBOSOMALL6"/>
</dbReference>
<dbReference type="SUPFAM" id="SSF56053">
    <property type="entry name" value="Ribosomal protein L6"/>
    <property type="match status" value="2"/>
</dbReference>
<dbReference type="PROSITE" id="PS00525">
    <property type="entry name" value="RIBOSOMAL_L6_1"/>
    <property type="match status" value="1"/>
</dbReference>